<keyword id="KW-0963">Cytoplasm</keyword>
<keyword id="KW-0275">Fatty acid biosynthesis</keyword>
<keyword id="KW-0276">Fatty acid metabolism</keyword>
<keyword id="KW-0444">Lipid biosynthesis</keyword>
<keyword id="KW-0443">Lipid metabolism</keyword>
<keyword id="KW-0596">Phosphopantetheine</keyword>
<keyword id="KW-0597">Phosphoprotein</keyword>
<protein>
    <recommendedName>
        <fullName evidence="1">Acyl carrier protein</fullName>
        <shortName evidence="1">ACP</shortName>
    </recommendedName>
</protein>
<organism>
    <name type="scientific">Buchnera aphidicola subsp. Acyrthosiphon pisum (strain 5A)</name>
    <dbReference type="NCBI Taxonomy" id="563178"/>
    <lineage>
        <taxon>Bacteria</taxon>
        <taxon>Pseudomonadati</taxon>
        <taxon>Pseudomonadota</taxon>
        <taxon>Gammaproteobacteria</taxon>
        <taxon>Enterobacterales</taxon>
        <taxon>Erwiniaceae</taxon>
        <taxon>Buchnera</taxon>
    </lineage>
</organism>
<feature type="chain" id="PRO_1000164775" description="Acyl carrier protein">
    <location>
        <begin position="1"/>
        <end position="80"/>
    </location>
</feature>
<feature type="domain" description="Carrier" evidence="2">
    <location>
        <begin position="2"/>
        <end position="77"/>
    </location>
</feature>
<feature type="modified residue" description="O-(pantetheine 4'-phosphoryl)serine" evidence="2">
    <location>
        <position position="37"/>
    </location>
</feature>
<proteinExistence type="inferred from homology"/>
<evidence type="ECO:0000255" key="1">
    <source>
        <dbReference type="HAMAP-Rule" id="MF_01217"/>
    </source>
</evidence>
<evidence type="ECO:0000255" key="2">
    <source>
        <dbReference type="PROSITE-ProRule" id="PRU00258"/>
    </source>
</evidence>
<gene>
    <name evidence="1" type="primary">acpP</name>
    <name type="ordered locus">BUAP5A_345</name>
</gene>
<reference key="1">
    <citation type="journal article" date="2009" name="Science">
        <title>The dynamics and time scale of ongoing genomic erosion in symbiotic bacteria.</title>
        <authorList>
            <person name="Moran N.A."/>
            <person name="McLaughlin H.J."/>
            <person name="Sorek R."/>
        </authorList>
    </citation>
    <scope>NUCLEOTIDE SEQUENCE [LARGE SCALE GENOMIC DNA]</scope>
    <source>
        <strain>5A</strain>
    </source>
</reference>
<accession>B8D9D7</accession>
<sequence length="80" mass="9363">MKNIEERIKKIIFEKLDIKQEKIFNDASFIDDLGADSLDTVELIMALEEEFDIEISDEEAEKINTVQKSIDFIQNKNLKK</sequence>
<name>ACP_BUCA5</name>
<comment type="function">
    <text evidence="1">Carrier of the growing fatty acid chain in fatty acid biosynthesis.</text>
</comment>
<comment type="pathway">
    <text evidence="1">Lipid metabolism; fatty acid biosynthesis.</text>
</comment>
<comment type="subcellular location">
    <subcellularLocation>
        <location evidence="1">Cytoplasm</location>
    </subcellularLocation>
</comment>
<comment type="PTM">
    <text evidence="1">4'-phosphopantetheine is transferred from CoA to a specific serine of apo-ACP by AcpS. This modification is essential for activity because fatty acids are bound in thioester linkage to the sulfhydryl of the prosthetic group.</text>
</comment>
<comment type="similarity">
    <text evidence="1">Belongs to the acyl carrier protein (ACP) family.</text>
</comment>
<dbReference type="EMBL" id="CP001161">
    <property type="protein sequence ID" value="ACL30708.1"/>
    <property type="molecule type" value="Genomic_DNA"/>
</dbReference>
<dbReference type="RefSeq" id="WP_009874308.1">
    <property type="nucleotide sequence ID" value="NC_011833.1"/>
</dbReference>
<dbReference type="SMR" id="B8D9D7"/>
<dbReference type="KEGG" id="bap:BUAP5A_345"/>
<dbReference type="HOGENOM" id="CLU_108696_5_1_6"/>
<dbReference type="OrthoDB" id="9804551at2"/>
<dbReference type="UniPathway" id="UPA00094"/>
<dbReference type="Proteomes" id="UP000006904">
    <property type="component" value="Chromosome"/>
</dbReference>
<dbReference type="GO" id="GO:0005829">
    <property type="term" value="C:cytosol"/>
    <property type="evidence" value="ECO:0007669"/>
    <property type="project" value="TreeGrafter"/>
</dbReference>
<dbReference type="GO" id="GO:0016020">
    <property type="term" value="C:membrane"/>
    <property type="evidence" value="ECO:0007669"/>
    <property type="project" value="GOC"/>
</dbReference>
<dbReference type="GO" id="GO:0000035">
    <property type="term" value="F:acyl binding"/>
    <property type="evidence" value="ECO:0007669"/>
    <property type="project" value="TreeGrafter"/>
</dbReference>
<dbReference type="GO" id="GO:0000036">
    <property type="term" value="F:acyl carrier activity"/>
    <property type="evidence" value="ECO:0007669"/>
    <property type="project" value="UniProtKB-UniRule"/>
</dbReference>
<dbReference type="GO" id="GO:0009245">
    <property type="term" value="P:lipid A biosynthetic process"/>
    <property type="evidence" value="ECO:0007669"/>
    <property type="project" value="TreeGrafter"/>
</dbReference>
<dbReference type="FunFam" id="1.10.1200.10:FF:000001">
    <property type="entry name" value="Acyl carrier protein"/>
    <property type="match status" value="1"/>
</dbReference>
<dbReference type="Gene3D" id="1.10.1200.10">
    <property type="entry name" value="ACP-like"/>
    <property type="match status" value="1"/>
</dbReference>
<dbReference type="HAMAP" id="MF_01217">
    <property type="entry name" value="Acyl_carrier"/>
    <property type="match status" value="1"/>
</dbReference>
<dbReference type="InterPro" id="IPR003231">
    <property type="entry name" value="ACP"/>
</dbReference>
<dbReference type="InterPro" id="IPR036736">
    <property type="entry name" value="ACP-like_sf"/>
</dbReference>
<dbReference type="InterPro" id="IPR009081">
    <property type="entry name" value="PP-bd_ACP"/>
</dbReference>
<dbReference type="InterPro" id="IPR006162">
    <property type="entry name" value="Ppantetheine_attach_site"/>
</dbReference>
<dbReference type="NCBIfam" id="TIGR00517">
    <property type="entry name" value="acyl_carrier"/>
    <property type="match status" value="1"/>
</dbReference>
<dbReference type="NCBIfam" id="NF002148">
    <property type="entry name" value="PRK00982.1-2"/>
    <property type="match status" value="1"/>
</dbReference>
<dbReference type="NCBIfam" id="NF002149">
    <property type="entry name" value="PRK00982.1-3"/>
    <property type="match status" value="1"/>
</dbReference>
<dbReference type="NCBIfam" id="NF002150">
    <property type="entry name" value="PRK00982.1-4"/>
    <property type="match status" value="1"/>
</dbReference>
<dbReference type="NCBIfam" id="NF002151">
    <property type="entry name" value="PRK00982.1-5"/>
    <property type="match status" value="1"/>
</dbReference>
<dbReference type="PANTHER" id="PTHR20863">
    <property type="entry name" value="ACYL CARRIER PROTEIN"/>
    <property type="match status" value="1"/>
</dbReference>
<dbReference type="PANTHER" id="PTHR20863:SF76">
    <property type="entry name" value="CARRIER DOMAIN-CONTAINING PROTEIN"/>
    <property type="match status" value="1"/>
</dbReference>
<dbReference type="Pfam" id="PF00550">
    <property type="entry name" value="PP-binding"/>
    <property type="match status" value="1"/>
</dbReference>
<dbReference type="SUPFAM" id="SSF47336">
    <property type="entry name" value="ACP-like"/>
    <property type="match status" value="1"/>
</dbReference>
<dbReference type="PROSITE" id="PS50075">
    <property type="entry name" value="CARRIER"/>
    <property type="match status" value="1"/>
</dbReference>
<dbReference type="PROSITE" id="PS00012">
    <property type="entry name" value="PHOSPHOPANTETHEINE"/>
    <property type="match status" value="1"/>
</dbReference>